<name>FLUC1_STAEQ</name>
<proteinExistence type="inferred from homology"/>
<evidence type="ECO:0000255" key="1">
    <source>
        <dbReference type="HAMAP-Rule" id="MF_00454"/>
    </source>
</evidence>
<feature type="chain" id="PRO_0000110187" description="Fluoride-specific ion channel FluC 1">
    <location>
        <begin position="1"/>
        <end position="121"/>
    </location>
</feature>
<feature type="transmembrane region" description="Helical" evidence="1">
    <location>
        <begin position="3"/>
        <end position="23"/>
    </location>
</feature>
<feature type="transmembrane region" description="Helical" evidence="1">
    <location>
        <begin position="29"/>
        <end position="49"/>
    </location>
</feature>
<feature type="transmembrane region" description="Helical" evidence="1">
    <location>
        <begin position="67"/>
        <end position="87"/>
    </location>
</feature>
<feature type="transmembrane region" description="Helical" evidence="1">
    <location>
        <begin position="92"/>
        <end position="112"/>
    </location>
</feature>
<feature type="binding site" evidence="1">
    <location>
        <position position="71"/>
    </location>
    <ligand>
        <name>Na(+)</name>
        <dbReference type="ChEBI" id="CHEBI:29101"/>
        <note>structural</note>
    </ligand>
</feature>
<feature type="binding site" evidence="1">
    <location>
        <position position="74"/>
    </location>
    <ligand>
        <name>Na(+)</name>
        <dbReference type="ChEBI" id="CHEBI:29101"/>
        <note>structural</note>
    </ligand>
</feature>
<reference key="1">
    <citation type="journal article" date="2005" name="J. Bacteriol.">
        <title>Insights on evolution of virulence and resistance from the complete genome analysis of an early methicillin-resistant Staphylococcus aureus strain and a biofilm-producing methicillin-resistant Staphylococcus epidermidis strain.</title>
        <authorList>
            <person name="Gill S.R."/>
            <person name="Fouts D.E."/>
            <person name="Archer G.L."/>
            <person name="Mongodin E.F."/>
            <person name="DeBoy R.T."/>
            <person name="Ravel J."/>
            <person name="Paulsen I.T."/>
            <person name="Kolonay J.F."/>
            <person name="Brinkac L.M."/>
            <person name="Beanan M.J."/>
            <person name="Dodson R.J."/>
            <person name="Daugherty S.C."/>
            <person name="Madupu R."/>
            <person name="Angiuoli S.V."/>
            <person name="Durkin A.S."/>
            <person name="Haft D.H."/>
            <person name="Vamathevan J.J."/>
            <person name="Khouri H."/>
            <person name="Utterback T.R."/>
            <person name="Lee C."/>
            <person name="Dimitrov G."/>
            <person name="Jiang L."/>
            <person name="Qin H."/>
            <person name="Weidman J."/>
            <person name="Tran K."/>
            <person name="Kang K.H."/>
            <person name="Hance I.R."/>
            <person name="Nelson K.E."/>
            <person name="Fraser C.M."/>
        </authorList>
    </citation>
    <scope>NUCLEOTIDE SEQUENCE [LARGE SCALE GENOMIC DNA]</scope>
    <source>
        <strain>ATCC 35984 / DSM 28319 / BCRC 17069 / CCUG 31568 / BM 3577 / RP62A</strain>
    </source>
</reference>
<comment type="function">
    <text evidence="1">Fluoride-specific ion channel. Important for reducing fluoride concentration in the cell, thus reducing its toxicity.</text>
</comment>
<comment type="catalytic activity">
    <reaction evidence="1">
        <text>fluoride(in) = fluoride(out)</text>
        <dbReference type="Rhea" id="RHEA:76159"/>
        <dbReference type="ChEBI" id="CHEBI:17051"/>
    </reaction>
    <physiologicalReaction direction="left-to-right" evidence="1">
        <dbReference type="Rhea" id="RHEA:76160"/>
    </physiologicalReaction>
</comment>
<comment type="activity regulation">
    <text evidence="1">Na(+) is not transported, but it plays an essential structural role and its presence is essential for fluoride channel function.</text>
</comment>
<comment type="subcellular location">
    <subcellularLocation>
        <location evidence="1">Cell membrane</location>
        <topology evidence="1">Multi-pass membrane protein</topology>
    </subcellularLocation>
</comment>
<comment type="similarity">
    <text evidence="1">Belongs to the fluoride channel Fluc/FEX (TC 1.A.43) family.</text>
</comment>
<keyword id="KW-1003">Cell membrane</keyword>
<keyword id="KW-0407">Ion channel</keyword>
<keyword id="KW-0406">Ion transport</keyword>
<keyword id="KW-0472">Membrane</keyword>
<keyword id="KW-0479">Metal-binding</keyword>
<keyword id="KW-1185">Reference proteome</keyword>
<keyword id="KW-0915">Sodium</keyword>
<keyword id="KW-0812">Transmembrane</keyword>
<keyword id="KW-1133">Transmembrane helix</keyword>
<keyword id="KW-0813">Transport</keyword>
<gene>
    <name evidence="1" type="primary">fluC1</name>
    <name evidence="1" type="synonym">crcB1</name>
    <name type="ordered locus">SERP1338</name>
</gene>
<accession>Q5HND1</accession>
<sequence length="121" mass="13082">MQYLYIFVGGALGALIRFCLSMLNEGSTIPLGTFVANLLGAFLMGSIGALSLSLFKTHPNIKKGLTTGLLGALTTFSTFQFELVTLFNQHHFILFTIYGVTSYILGILSCYLGVKIGGRFS</sequence>
<organism>
    <name type="scientific">Staphylococcus epidermidis (strain ATCC 35984 / DSM 28319 / BCRC 17069 / CCUG 31568 / BM 3577 / RP62A)</name>
    <dbReference type="NCBI Taxonomy" id="176279"/>
    <lineage>
        <taxon>Bacteria</taxon>
        <taxon>Bacillati</taxon>
        <taxon>Bacillota</taxon>
        <taxon>Bacilli</taxon>
        <taxon>Bacillales</taxon>
        <taxon>Staphylococcaceae</taxon>
        <taxon>Staphylococcus</taxon>
    </lineage>
</organism>
<protein>
    <recommendedName>
        <fullName evidence="1">Fluoride-specific ion channel FluC 1</fullName>
    </recommendedName>
</protein>
<dbReference type="EMBL" id="CP000029">
    <property type="protein sequence ID" value="AAW54681.1"/>
    <property type="molecule type" value="Genomic_DNA"/>
</dbReference>
<dbReference type="SMR" id="Q5HND1"/>
<dbReference type="STRING" id="176279.SERP1338"/>
<dbReference type="KEGG" id="ser:SERP1338"/>
<dbReference type="eggNOG" id="COG0239">
    <property type="taxonomic scope" value="Bacteria"/>
</dbReference>
<dbReference type="HOGENOM" id="CLU_114342_3_2_9"/>
<dbReference type="Proteomes" id="UP000000531">
    <property type="component" value="Chromosome"/>
</dbReference>
<dbReference type="GO" id="GO:0005886">
    <property type="term" value="C:plasma membrane"/>
    <property type="evidence" value="ECO:0007669"/>
    <property type="project" value="UniProtKB-SubCell"/>
</dbReference>
<dbReference type="GO" id="GO:0062054">
    <property type="term" value="F:fluoride channel activity"/>
    <property type="evidence" value="ECO:0007669"/>
    <property type="project" value="UniProtKB-UniRule"/>
</dbReference>
<dbReference type="GO" id="GO:0046872">
    <property type="term" value="F:metal ion binding"/>
    <property type="evidence" value="ECO:0007669"/>
    <property type="project" value="UniProtKB-KW"/>
</dbReference>
<dbReference type="GO" id="GO:0140114">
    <property type="term" value="P:cellular detoxification of fluoride"/>
    <property type="evidence" value="ECO:0007669"/>
    <property type="project" value="UniProtKB-UniRule"/>
</dbReference>
<dbReference type="HAMAP" id="MF_00454">
    <property type="entry name" value="FluC"/>
    <property type="match status" value="1"/>
</dbReference>
<dbReference type="InterPro" id="IPR003691">
    <property type="entry name" value="FluC"/>
</dbReference>
<dbReference type="NCBIfam" id="NF010797">
    <property type="entry name" value="PRK14201.1"/>
    <property type="match status" value="1"/>
</dbReference>
<dbReference type="PANTHER" id="PTHR28259">
    <property type="entry name" value="FLUORIDE EXPORT PROTEIN 1-RELATED"/>
    <property type="match status" value="1"/>
</dbReference>
<dbReference type="PANTHER" id="PTHR28259:SF16">
    <property type="entry name" value="FLUORIDE-SPECIFIC ION CHANNEL FLUC 2"/>
    <property type="match status" value="1"/>
</dbReference>
<dbReference type="Pfam" id="PF02537">
    <property type="entry name" value="CRCB"/>
    <property type="match status" value="1"/>
</dbReference>